<organism>
    <name type="scientific">Nitrosomonas eutropha (strain DSM 101675 / C91 / Nm57)</name>
    <dbReference type="NCBI Taxonomy" id="335283"/>
    <lineage>
        <taxon>Bacteria</taxon>
        <taxon>Pseudomonadati</taxon>
        <taxon>Pseudomonadota</taxon>
        <taxon>Betaproteobacteria</taxon>
        <taxon>Nitrosomonadales</taxon>
        <taxon>Nitrosomonadaceae</taxon>
        <taxon>Nitrosomonas</taxon>
    </lineage>
</organism>
<gene>
    <name evidence="1" type="primary">nagZ</name>
    <name type="ordered locus">Neut_1774</name>
</gene>
<reference key="1">
    <citation type="journal article" date="2007" name="Environ. Microbiol.">
        <title>Whole-genome analysis of the ammonia-oxidizing bacterium, Nitrosomonas eutropha C91: implications for niche adaptation.</title>
        <authorList>
            <person name="Stein L.Y."/>
            <person name="Arp D.J."/>
            <person name="Berube P.M."/>
            <person name="Chain P.S."/>
            <person name="Hauser L."/>
            <person name="Jetten M.S."/>
            <person name="Klotz M.G."/>
            <person name="Larimer F.W."/>
            <person name="Norton J.M."/>
            <person name="Op den Camp H.J.M."/>
            <person name="Shin M."/>
            <person name="Wei X."/>
        </authorList>
    </citation>
    <scope>NUCLEOTIDE SEQUENCE [LARGE SCALE GENOMIC DNA]</scope>
    <source>
        <strain>DSM 101675 / C91 / Nm57</strain>
    </source>
</reference>
<protein>
    <recommendedName>
        <fullName evidence="1">Beta-hexosaminidase</fullName>
        <ecNumber evidence="1">3.2.1.52</ecNumber>
    </recommendedName>
    <alternativeName>
        <fullName evidence="1">Beta-N-acetylhexosaminidase</fullName>
    </alternativeName>
    <alternativeName>
        <fullName evidence="1">N-acetyl-beta-glucosaminidase</fullName>
    </alternativeName>
</protein>
<name>NAGZ_NITEC</name>
<accession>Q0AF74</accession>
<keyword id="KW-0131">Cell cycle</keyword>
<keyword id="KW-0132">Cell division</keyword>
<keyword id="KW-0133">Cell shape</keyword>
<keyword id="KW-0961">Cell wall biogenesis/degradation</keyword>
<keyword id="KW-0963">Cytoplasm</keyword>
<keyword id="KW-0326">Glycosidase</keyword>
<keyword id="KW-0378">Hydrolase</keyword>
<keyword id="KW-0573">Peptidoglycan synthesis</keyword>
<feature type="chain" id="PRO_1000005658" description="Beta-hexosaminidase">
    <location>
        <begin position="1"/>
        <end position="348"/>
    </location>
</feature>
<feature type="active site" description="Proton donor/acceptor" evidence="1">
    <location>
        <position position="181"/>
    </location>
</feature>
<feature type="active site" description="Nucleophile" evidence="1">
    <location>
        <position position="252"/>
    </location>
</feature>
<feature type="binding site" evidence="1">
    <location>
        <position position="64"/>
    </location>
    <ligand>
        <name>substrate</name>
    </ligand>
</feature>
<feature type="binding site" evidence="1">
    <location>
        <position position="72"/>
    </location>
    <ligand>
        <name>substrate</name>
    </ligand>
</feature>
<feature type="binding site" evidence="1">
    <location>
        <position position="138"/>
    </location>
    <ligand>
        <name>substrate</name>
    </ligand>
</feature>
<feature type="binding site" evidence="1">
    <location>
        <begin position="168"/>
        <end position="169"/>
    </location>
    <ligand>
        <name>substrate</name>
    </ligand>
</feature>
<feature type="site" description="Important for catalytic activity" evidence="1">
    <location>
        <position position="179"/>
    </location>
</feature>
<comment type="function">
    <text evidence="1">Plays a role in peptidoglycan recycling by cleaving the terminal beta-1,4-linked N-acetylglucosamine (GlcNAc) from peptide-linked peptidoglycan fragments, giving rise to free GlcNAc, anhydro-N-acetylmuramic acid and anhydro-N-acetylmuramic acid-linked peptides.</text>
</comment>
<comment type="catalytic activity">
    <reaction evidence="1">
        <text>Hydrolysis of terminal non-reducing N-acetyl-D-hexosamine residues in N-acetyl-beta-D-hexosaminides.</text>
        <dbReference type="EC" id="3.2.1.52"/>
    </reaction>
</comment>
<comment type="pathway">
    <text evidence="1">Cell wall biogenesis; peptidoglycan recycling.</text>
</comment>
<comment type="subcellular location">
    <subcellularLocation>
        <location evidence="1">Cytoplasm</location>
    </subcellularLocation>
</comment>
<comment type="similarity">
    <text evidence="1">Belongs to the glycosyl hydrolase 3 family. NagZ subfamily.</text>
</comment>
<sequence length="348" mass="38310">MFLGPLMLDIAGTTLTETDRVQLSHPLVGGVILFARNYESPAQLSELTASIHALRSPPLLIAVDQEGGRVQRFRDGFTRLPPMRTLGEIQDRNPDLSLHLARQIGYVLAAELKACGVDVSFTPVLDLDCEQSSVIGDRAFYREPQVVAELAHALMSGLQSVGMVAVGKHFPGHGAIQADTHVETAIDSRNYTDIEKKDLTPFRRMIDTGLSGIMAAHVIYPAIDPNPAGFSSKWLQDILRNELGFRGCIFSDDLCMQAARNYGSITHRAEQALQAGCNMVLICNDPDSADELLTSLQWEFSAVDTARLEHMRGQQTVHSMAQLHEMERFIRATEEISRISLANISVSV</sequence>
<proteinExistence type="inferred from homology"/>
<evidence type="ECO:0000255" key="1">
    <source>
        <dbReference type="HAMAP-Rule" id="MF_00364"/>
    </source>
</evidence>
<dbReference type="EC" id="3.2.1.52" evidence="1"/>
<dbReference type="EMBL" id="CP000450">
    <property type="protein sequence ID" value="ABI60008.1"/>
    <property type="molecule type" value="Genomic_DNA"/>
</dbReference>
<dbReference type="RefSeq" id="WP_011634814.1">
    <property type="nucleotide sequence ID" value="NC_008344.1"/>
</dbReference>
<dbReference type="SMR" id="Q0AF74"/>
<dbReference type="STRING" id="335283.Neut_1774"/>
<dbReference type="CAZy" id="GH3">
    <property type="family name" value="Glycoside Hydrolase Family 3"/>
</dbReference>
<dbReference type="KEGG" id="net:Neut_1774"/>
<dbReference type="eggNOG" id="COG1472">
    <property type="taxonomic scope" value="Bacteria"/>
</dbReference>
<dbReference type="HOGENOM" id="CLU_008392_0_0_4"/>
<dbReference type="OrthoDB" id="9786661at2"/>
<dbReference type="UniPathway" id="UPA00544"/>
<dbReference type="Proteomes" id="UP000001966">
    <property type="component" value="Chromosome"/>
</dbReference>
<dbReference type="GO" id="GO:0005737">
    <property type="term" value="C:cytoplasm"/>
    <property type="evidence" value="ECO:0007669"/>
    <property type="project" value="UniProtKB-SubCell"/>
</dbReference>
<dbReference type="GO" id="GO:0004563">
    <property type="term" value="F:beta-N-acetylhexosaminidase activity"/>
    <property type="evidence" value="ECO:0007669"/>
    <property type="project" value="UniProtKB-UniRule"/>
</dbReference>
<dbReference type="GO" id="GO:0005975">
    <property type="term" value="P:carbohydrate metabolic process"/>
    <property type="evidence" value="ECO:0007669"/>
    <property type="project" value="InterPro"/>
</dbReference>
<dbReference type="GO" id="GO:0051301">
    <property type="term" value="P:cell division"/>
    <property type="evidence" value="ECO:0007669"/>
    <property type="project" value="UniProtKB-KW"/>
</dbReference>
<dbReference type="GO" id="GO:0071555">
    <property type="term" value="P:cell wall organization"/>
    <property type="evidence" value="ECO:0007669"/>
    <property type="project" value="UniProtKB-KW"/>
</dbReference>
<dbReference type="GO" id="GO:0009252">
    <property type="term" value="P:peptidoglycan biosynthetic process"/>
    <property type="evidence" value="ECO:0007669"/>
    <property type="project" value="UniProtKB-KW"/>
</dbReference>
<dbReference type="GO" id="GO:0009254">
    <property type="term" value="P:peptidoglycan turnover"/>
    <property type="evidence" value="ECO:0007669"/>
    <property type="project" value="UniProtKB-UniRule"/>
</dbReference>
<dbReference type="GO" id="GO:0008360">
    <property type="term" value="P:regulation of cell shape"/>
    <property type="evidence" value="ECO:0007669"/>
    <property type="project" value="UniProtKB-KW"/>
</dbReference>
<dbReference type="Gene3D" id="3.20.20.300">
    <property type="entry name" value="Glycoside hydrolase, family 3, N-terminal domain"/>
    <property type="match status" value="1"/>
</dbReference>
<dbReference type="HAMAP" id="MF_00364">
    <property type="entry name" value="NagZ"/>
    <property type="match status" value="1"/>
</dbReference>
<dbReference type="InterPro" id="IPR022956">
    <property type="entry name" value="Beta_hexosaminidase_bac"/>
</dbReference>
<dbReference type="InterPro" id="IPR001764">
    <property type="entry name" value="Glyco_hydro_3_N"/>
</dbReference>
<dbReference type="InterPro" id="IPR036962">
    <property type="entry name" value="Glyco_hydro_3_N_sf"/>
</dbReference>
<dbReference type="InterPro" id="IPR017853">
    <property type="entry name" value="Glycoside_hydrolase_SF"/>
</dbReference>
<dbReference type="InterPro" id="IPR050226">
    <property type="entry name" value="NagZ_Beta-hexosaminidase"/>
</dbReference>
<dbReference type="NCBIfam" id="NF003740">
    <property type="entry name" value="PRK05337.1"/>
    <property type="match status" value="1"/>
</dbReference>
<dbReference type="PANTHER" id="PTHR30480:SF13">
    <property type="entry name" value="BETA-HEXOSAMINIDASE"/>
    <property type="match status" value="1"/>
</dbReference>
<dbReference type="PANTHER" id="PTHR30480">
    <property type="entry name" value="BETA-HEXOSAMINIDASE-RELATED"/>
    <property type="match status" value="1"/>
</dbReference>
<dbReference type="Pfam" id="PF00933">
    <property type="entry name" value="Glyco_hydro_3"/>
    <property type="match status" value="1"/>
</dbReference>
<dbReference type="SUPFAM" id="SSF51445">
    <property type="entry name" value="(Trans)glycosidases"/>
    <property type="match status" value="1"/>
</dbReference>